<organism>
    <name type="scientific">Actinobacillus succinogenes (strain ATCC 55618 / DSM 22257 / CCUG 43843 / 130Z)</name>
    <dbReference type="NCBI Taxonomy" id="339671"/>
    <lineage>
        <taxon>Bacteria</taxon>
        <taxon>Pseudomonadati</taxon>
        <taxon>Pseudomonadota</taxon>
        <taxon>Gammaproteobacteria</taxon>
        <taxon>Pasteurellales</taxon>
        <taxon>Pasteurellaceae</taxon>
        <taxon>Actinobacillus</taxon>
    </lineage>
</organism>
<protein>
    <recommendedName>
        <fullName evidence="1">tRNA (guanine-N(1)-)-methyltransferase</fullName>
        <ecNumber evidence="1">2.1.1.228</ecNumber>
    </recommendedName>
    <alternativeName>
        <fullName evidence="1">M1G-methyltransferase</fullName>
    </alternativeName>
    <alternativeName>
        <fullName evidence="1">tRNA [GM37] methyltransferase</fullName>
    </alternativeName>
</protein>
<evidence type="ECO:0000255" key="1">
    <source>
        <dbReference type="HAMAP-Rule" id="MF_00605"/>
    </source>
</evidence>
<comment type="function">
    <text evidence="1">Specifically methylates guanosine-37 in various tRNAs.</text>
</comment>
<comment type="catalytic activity">
    <reaction evidence="1">
        <text>guanosine(37) in tRNA + S-adenosyl-L-methionine = N(1)-methylguanosine(37) in tRNA + S-adenosyl-L-homocysteine + H(+)</text>
        <dbReference type="Rhea" id="RHEA:36899"/>
        <dbReference type="Rhea" id="RHEA-COMP:10145"/>
        <dbReference type="Rhea" id="RHEA-COMP:10147"/>
        <dbReference type="ChEBI" id="CHEBI:15378"/>
        <dbReference type="ChEBI" id="CHEBI:57856"/>
        <dbReference type="ChEBI" id="CHEBI:59789"/>
        <dbReference type="ChEBI" id="CHEBI:73542"/>
        <dbReference type="ChEBI" id="CHEBI:74269"/>
        <dbReference type="EC" id="2.1.1.228"/>
    </reaction>
</comment>
<comment type="subunit">
    <text evidence="1">Homodimer.</text>
</comment>
<comment type="subcellular location">
    <subcellularLocation>
        <location evidence="1">Cytoplasm</location>
    </subcellularLocation>
</comment>
<comment type="similarity">
    <text evidence="1">Belongs to the RNA methyltransferase TrmD family.</text>
</comment>
<gene>
    <name evidence="1" type="primary">trmD</name>
    <name type="ordered locus">Asuc_0518</name>
</gene>
<proteinExistence type="inferred from homology"/>
<dbReference type="EC" id="2.1.1.228" evidence="1"/>
<dbReference type="EMBL" id="CP000746">
    <property type="protein sequence ID" value="ABR73893.1"/>
    <property type="molecule type" value="Genomic_DNA"/>
</dbReference>
<dbReference type="RefSeq" id="WP_012072273.1">
    <property type="nucleotide sequence ID" value="NC_009655.1"/>
</dbReference>
<dbReference type="SMR" id="A6VLP6"/>
<dbReference type="STRING" id="339671.Asuc_0518"/>
<dbReference type="KEGG" id="asu:Asuc_0518"/>
<dbReference type="eggNOG" id="COG0336">
    <property type="taxonomic scope" value="Bacteria"/>
</dbReference>
<dbReference type="HOGENOM" id="CLU_047363_0_1_6"/>
<dbReference type="OrthoDB" id="9807416at2"/>
<dbReference type="Proteomes" id="UP000001114">
    <property type="component" value="Chromosome"/>
</dbReference>
<dbReference type="GO" id="GO:0005829">
    <property type="term" value="C:cytosol"/>
    <property type="evidence" value="ECO:0007669"/>
    <property type="project" value="TreeGrafter"/>
</dbReference>
<dbReference type="GO" id="GO:0052906">
    <property type="term" value="F:tRNA (guanine(37)-N1)-methyltransferase activity"/>
    <property type="evidence" value="ECO:0007669"/>
    <property type="project" value="UniProtKB-UniRule"/>
</dbReference>
<dbReference type="GO" id="GO:0002939">
    <property type="term" value="P:tRNA N1-guanine methylation"/>
    <property type="evidence" value="ECO:0007669"/>
    <property type="project" value="TreeGrafter"/>
</dbReference>
<dbReference type="CDD" id="cd18080">
    <property type="entry name" value="TrmD-like"/>
    <property type="match status" value="1"/>
</dbReference>
<dbReference type="FunFam" id="1.10.1270.20:FF:000001">
    <property type="entry name" value="tRNA (guanine-N(1)-)-methyltransferase"/>
    <property type="match status" value="1"/>
</dbReference>
<dbReference type="FunFam" id="3.40.1280.10:FF:000001">
    <property type="entry name" value="tRNA (guanine-N(1)-)-methyltransferase"/>
    <property type="match status" value="1"/>
</dbReference>
<dbReference type="Gene3D" id="3.40.1280.10">
    <property type="match status" value="1"/>
</dbReference>
<dbReference type="Gene3D" id="1.10.1270.20">
    <property type="entry name" value="tRNA(m1g37)methyltransferase, domain 2"/>
    <property type="match status" value="1"/>
</dbReference>
<dbReference type="HAMAP" id="MF_00605">
    <property type="entry name" value="TrmD"/>
    <property type="match status" value="1"/>
</dbReference>
<dbReference type="InterPro" id="IPR029028">
    <property type="entry name" value="Alpha/beta_knot_MTases"/>
</dbReference>
<dbReference type="InterPro" id="IPR023148">
    <property type="entry name" value="tRNA_m1G_MeTrfase_C_sf"/>
</dbReference>
<dbReference type="InterPro" id="IPR002649">
    <property type="entry name" value="tRNA_m1G_MeTrfase_TrmD"/>
</dbReference>
<dbReference type="InterPro" id="IPR029026">
    <property type="entry name" value="tRNA_m1G_MTases_N"/>
</dbReference>
<dbReference type="InterPro" id="IPR016009">
    <property type="entry name" value="tRNA_MeTrfase_TRMD/TRM10"/>
</dbReference>
<dbReference type="NCBIfam" id="NF000648">
    <property type="entry name" value="PRK00026.1"/>
    <property type="match status" value="1"/>
</dbReference>
<dbReference type="NCBIfam" id="TIGR00088">
    <property type="entry name" value="trmD"/>
    <property type="match status" value="1"/>
</dbReference>
<dbReference type="PANTHER" id="PTHR46417">
    <property type="entry name" value="TRNA (GUANINE-N(1)-)-METHYLTRANSFERASE"/>
    <property type="match status" value="1"/>
</dbReference>
<dbReference type="PANTHER" id="PTHR46417:SF1">
    <property type="entry name" value="TRNA (GUANINE-N(1)-)-METHYLTRANSFERASE"/>
    <property type="match status" value="1"/>
</dbReference>
<dbReference type="Pfam" id="PF01746">
    <property type="entry name" value="tRNA_m1G_MT"/>
    <property type="match status" value="1"/>
</dbReference>
<dbReference type="PIRSF" id="PIRSF000386">
    <property type="entry name" value="tRNA_mtase"/>
    <property type="match status" value="1"/>
</dbReference>
<dbReference type="SUPFAM" id="SSF75217">
    <property type="entry name" value="alpha/beta knot"/>
    <property type="match status" value="1"/>
</dbReference>
<feature type="chain" id="PRO_1000072635" description="tRNA (guanine-N(1)-)-methyltransferase">
    <location>
        <begin position="1"/>
        <end position="245"/>
    </location>
</feature>
<feature type="binding site" evidence="1">
    <location>
        <position position="113"/>
    </location>
    <ligand>
        <name>S-adenosyl-L-methionine</name>
        <dbReference type="ChEBI" id="CHEBI:59789"/>
    </ligand>
</feature>
<feature type="binding site" evidence="1">
    <location>
        <begin position="133"/>
        <end position="138"/>
    </location>
    <ligand>
        <name>S-adenosyl-L-methionine</name>
        <dbReference type="ChEBI" id="CHEBI:59789"/>
    </ligand>
</feature>
<keyword id="KW-0963">Cytoplasm</keyword>
<keyword id="KW-0489">Methyltransferase</keyword>
<keyword id="KW-1185">Reference proteome</keyword>
<keyword id="KW-0949">S-adenosyl-L-methionine</keyword>
<keyword id="KW-0808">Transferase</keyword>
<keyword id="KW-0819">tRNA processing</keyword>
<name>TRMD_ACTSZ</name>
<accession>A6VLP6</accession>
<sequence length="245" mass="27461">MFIGIVTLFPEMFKAITEFGVTGRAVKQNLLQVRCYNPRDFTHDKHKTVDDRPYGGGPGMLMMVQPLRDAIHSAKAEAGEGVKVIYLSPQGRKLEQSGVTELAQNKKLILVCGRYEGIDERLIQTEVDEEWSIGDYVLTGGELPAMTLIDAVARFIPGVLGKQASADEDSFAAGLLDCPHYTRPEELDGLTVPPVLMSGNHEQIRKWRLTQSLERTWLRRPELLEKLALTDEQKKILNQIKSETV</sequence>
<reference key="1">
    <citation type="journal article" date="2010" name="BMC Genomics">
        <title>A genomic perspective on the potential of Actinobacillus succinogenes for industrial succinate production.</title>
        <authorList>
            <person name="McKinlay J.B."/>
            <person name="Laivenieks M."/>
            <person name="Schindler B.D."/>
            <person name="McKinlay A.A."/>
            <person name="Siddaramappa S."/>
            <person name="Challacombe J.F."/>
            <person name="Lowry S.R."/>
            <person name="Clum A."/>
            <person name="Lapidus A.L."/>
            <person name="Burkhart K.B."/>
            <person name="Harkins V."/>
            <person name="Vieille C."/>
        </authorList>
    </citation>
    <scope>NUCLEOTIDE SEQUENCE [LARGE SCALE GENOMIC DNA]</scope>
    <source>
        <strain>ATCC 55618 / DSM 22257 / CCUG 43843 / 130Z</strain>
    </source>
</reference>